<protein>
    <recommendedName>
        <fullName evidence="1">Pole-localizer protein TmaR</fullName>
    </recommendedName>
</protein>
<evidence type="ECO:0000255" key="1">
    <source>
        <dbReference type="HAMAP-Rule" id="MF_00683"/>
    </source>
</evidence>
<proteinExistence type="inferred from homology"/>
<keyword id="KW-0175">Coiled coil</keyword>
<keyword id="KW-0963">Cytoplasm</keyword>
<feature type="chain" id="PRO_1000131764" description="Pole-localizer protein TmaR">
    <location>
        <begin position="1"/>
        <end position="109"/>
    </location>
</feature>
<feature type="coiled-coil region" evidence="1">
    <location>
        <begin position="14"/>
        <end position="41"/>
    </location>
</feature>
<dbReference type="EMBL" id="CP001164">
    <property type="protein sequence ID" value="ACI35399.1"/>
    <property type="molecule type" value="Genomic_DNA"/>
</dbReference>
<dbReference type="RefSeq" id="WP_000450409.1">
    <property type="nucleotide sequence ID" value="NC_011353.1"/>
</dbReference>
<dbReference type="SMR" id="B5YTE1"/>
<dbReference type="KEGG" id="ecf:ECH74115_2862"/>
<dbReference type="HOGENOM" id="CLU_153146_0_0_6"/>
<dbReference type="GO" id="GO:0005829">
    <property type="term" value="C:cytosol"/>
    <property type="evidence" value="ECO:0007669"/>
    <property type="project" value="TreeGrafter"/>
</dbReference>
<dbReference type="HAMAP" id="MF_00683">
    <property type="entry name" value="Pole_loc_TmaR"/>
    <property type="match status" value="1"/>
</dbReference>
<dbReference type="InterPro" id="IPR007458">
    <property type="entry name" value="DUF496"/>
</dbReference>
<dbReference type="InterPro" id="IPR053375">
    <property type="entry name" value="UPF0265"/>
</dbReference>
<dbReference type="NCBIfam" id="NF003844">
    <property type="entry name" value="PRK05423.1"/>
    <property type="match status" value="1"/>
</dbReference>
<dbReference type="NCBIfam" id="NF040881">
    <property type="entry name" value="PTS_reg_TmaR"/>
    <property type="match status" value="1"/>
</dbReference>
<dbReference type="PANTHER" id="PTHR39591">
    <property type="entry name" value="UPF0265 PROTEIN YEEX"/>
    <property type="match status" value="1"/>
</dbReference>
<dbReference type="PANTHER" id="PTHR39591:SF1">
    <property type="entry name" value="UPF0265 PROTEIN YEEX"/>
    <property type="match status" value="1"/>
</dbReference>
<dbReference type="Pfam" id="PF04363">
    <property type="entry name" value="DUF496"/>
    <property type="match status" value="1"/>
</dbReference>
<dbReference type="PIRSF" id="PIRSF028773">
    <property type="entry name" value="UCP028773"/>
    <property type="match status" value="1"/>
</dbReference>
<name>TMAR_ECO5E</name>
<comment type="function">
    <text evidence="1">Pole-localizer protein involved in the regulation of several cellular processes.</text>
</comment>
<comment type="subcellular location">
    <subcellularLocation>
        <location evidence="1">Cytoplasm</location>
    </subcellularLocation>
    <text evidence="1">Forms clusters that localize mainly near one pole of the cell.</text>
</comment>
<comment type="similarity">
    <text evidence="1">Belongs to the pole-localizer TmaR family.</text>
</comment>
<organism>
    <name type="scientific">Escherichia coli O157:H7 (strain EC4115 / EHEC)</name>
    <dbReference type="NCBI Taxonomy" id="444450"/>
    <lineage>
        <taxon>Bacteria</taxon>
        <taxon>Pseudomonadati</taxon>
        <taxon>Pseudomonadota</taxon>
        <taxon>Gammaproteobacteria</taxon>
        <taxon>Enterobacterales</taxon>
        <taxon>Enterobacteriaceae</taxon>
        <taxon>Escherichia</taxon>
    </lineage>
</organism>
<sequence length="109" mass="12778">METTKPSFQDVLEFVRLFRRKNKLQREIQDVEKKIRDNQKRVLLLDNLSDYIKPGMSVEAIQGIIASMKGDYEDRVDDYIIKNAELSKERRDISKKLKAMGEMKNGEAK</sequence>
<reference key="1">
    <citation type="journal article" date="2011" name="Proc. Natl. Acad. Sci. U.S.A.">
        <title>Genomic anatomy of Escherichia coli O157:H7 outbreaks.</title>
        <authorList>
            <person name="Eppinger M."/>
            <person name="Mammel M.K."/>
            <person name="Leclerc J.E."/>
            <person name="Ravel J."/>
            <person name="Cebula T.A."/>
        </authorList>
    </citation>
    <scope>NUCLEOTIDE SEQUENCE [LARGE SCALE GENOMIC DNA]</scope>
    <source>
        <strain>EC4115 / EHEC</strain>
    </source>
</reference>
<gene>
    <name evidence="1" type="primary">tmaR</name>
    <name type="ordered locus">ECH74115_2862</name>
</gene>
<accession>B5YTE1</accession>